<evidence type="ECO:0000255" key="1">
    <source>
        <dbReference type="HAMAP-Rule" id="MF_01216"/>
    </source>
</evidence>
<protein>
    <recommendedName>
        <fullName evidence="1">FMN-dependent NADH:quinone oxidoreductase 1</fullName>
        <ecNumber evidence="1">1.6.5.-</ecNumber>
    </recommendedName>
    <alternativeName>
        <fullName evidence="1">Azo-dye reductase 1</fullName>
    </alternativeName>
    <alternativeName>
        <fullName evidence="1">FMN-dependent NADH-azo compound oxidoreductase 1</fullName>
    </alternativeName>
    <alternativeName>
        <fullName evidence="1">FMN-dependent NADH-azoreductase 1</fullName>
        <ecNumber evidence="1">1.7.1.17</ecNumber>
    </alternativeName>
</protein>
<dbReference type="EC" id="1.6.5.-" evidence="1"/>
<dbReference type="EC" id="1.7.1.17" evidence="1"/>
<dbReference type="EMBL" id="AE017340">
    <property type="protein sequence ID" value="AAV82132.1"/>
    <property type="molecule type" value="Genomic_DNA"/>
</dbReference>
<dbReference type="RefSeq" id="WP_011234538.1">
    <property type="nucleotide sequence ID" value="NC_006512.1"/>
</dbReference>
<dbReference type="SMR" id="Q5QYY9"/>
<dbReference type="GeneID" id="41336468"/>
<dbReference type="KEGG" id="ilo:IL1292"/>
<dbReference type="eggNOG" id="COG1182">
    <property type="taxonomic scope" value="Bacteria"/>
</dbReference>
<dbReference type="HOGENOM" id="CLU_088964_0_0_6"/>
<dbReference type="OrthoDB" id="9787136at2"/>
<dbReference type="Proteomes" id="UP000001171">
    <property type="component" value="Chromosome"/>
</dbReference>
<dbReference type="GO" id="GO:0009055">
    <property type="term" value="F:electron transfer activity"/>
    <property type="evidence" value="ECO:0007669"/>
    <property type="project" value="UniProtKB-UniRule"/>
</dbReference>
<dbReference type="GO" id="GO:0010181">
    <property type="term" value="F:FMN binding"/>
    <property type="evidence" value="ECO:0007669"/>
    <property type="project" value="UniProtKB-UniRule"/>
</dbReference>
<dbReference type="GO" id="GO:0016652">
    <property type="term" value="F:oxidoreductase activity, acting on NAD(P)H as acceptor"/>
    <property type="evidence" value="ECO:0007669"/>
    <property type="project" value="UniProtKB-UniRule"/>
</dbReference>
<dbReference type="GO" id="GO:0016655">
    <property type="term" value="F:oxidoreductase activity, acting on NAD(P)H, quinone or similar compound as acceptor"/>
    <property type="evidence" value="ECO:0007669"/>
    <property type="project" value="InterPro"/>
</dbReference>
<dbReference type="Gene3D" id="3.40.50.360">
    <property type="match status" value="1"/>
</dbReference>
<dbReference type="HAMAP" id="MF_01216">
    <property type="entry name" value="Azoreductase_type1"/>
    <property type="match status" value="1"/>
</dbReference>
<dbReference type="InterPro" id="IPR003680">
    <property type="entry name" value="Flavodoxin_fold"/>
</dbReference>
<dbReference type="InterPro" id="IPR029039">
    <property type="entry name" value="Flavoprotein-like_sf"/>
</dbReference>
<dbReference type="InterPro" id="IPR050104">
    <property type="entry name" value="FMN-dep_NADH:Q_OxRdtase_AzoR1"/>
</dbReference>
<dbReference type="InterPro" id="IPR023048">
    <property type="entry name" value="NADH:quinone_OxRdtase_FMN_depd"/>
</dbReference>
<dbReference type="PANTHER" id="PTHR43741">
    <property type="entry name" value="FMN-DEPENDENT NADH-AZOREDUCTASE 1"/>
    <property type="match status" value="1"/>
</dbReference>
<dbReference type="PANTHER" id="PTHR43741:SF4">
    <property type="entry name" value="FMN-DEPENDENT NADH:QUINONE OXIDOREDUCTASE"/>
    <property type="match status" value="1"/>
</dbReference>
<dbReference type="Pfam" id="PF02525">
    <property type="entry name" value="Flavodoxin_2"/>
    <property type="match status" value="1"/>
</dbReference>
<dbReference type="SUPFAM" id="SSF52218">
    <property type="entry name" value="Flavoproteins"/>
    <property type="match status" value="1"/>
</dbReference>
<comment type="function">
    <text evidence="1">Quinone reductase that provides resistance to thiol-specific stress caused by electrophilic quinones.</text>
</comment>
<comment type="function">
    <text evidence="1">Also exhibits azoreductase activity. Catalyzes the reductive cleavage of the azo bond in aromatic azo compounds to the corresponding amines.</text>
</comment>
<comment type="catalytic activity">
    <reaction evidence="1">
        <text>2 a quinone + NADH + H(+) = 2 a 1,4-benzosemiquinone + NAD(+)</text>
        <dbReference type="Rhea" id="RHEA:65952"/>
        <dbReference type="ChEBI" id="CHEBI:15378"/>
        <dbReference type="ChEBI" id="CHEBI:57540"/>
        <dbReference type="ChEBI" id="CHEBI:57945"/>
        <dbReference type="ChEBI" id="CHEBI:132124"/>
        <dbReference type="ChEBI" id="CHEBI:134225"/>
    </reaction>
</comment>
<comment type="catalytic activity">
    <reaction evidence="1">
        <text>N,N-dimethyl-1,4-phenylenediamine + anthranilate + 2 NAD(+) = 2-(4-dimethylaminophenyl)diazenylbenzoate + 2 NADH + 2 H(+)</text>
        <dbReference type="Rhea" id="RHEA:55872"/>
        <dbReference type="ChEBI" id="CHEBI:15378"/>
        <dbReference type="ChEBI" id="CHEBI:15783"/>
        <dbReference type="ChEBI" id="CHEBI:16567"/>
        <dbReference type="ChEBI" id="CHEBI:57540"/>
        <dbReference type="ChEBI" id="CHEBI:57945"/>
        <dbReference type="ChEBI" id="CHEBI:71579"/>
        <dbReference type="EC" id="1.7.1.17"/>
    </reaction>
</comment>
<comment type="cofactor">
    <cofactor evidence="1">
        <name>FMN</name>
        <dbReference type="ChEBI" id="CHEBI:58210"/>
    </cofactor>
    <text evidence="1">Binds 1 FMN per subunit.</text>
</comment>
<comment type="subunit">
    <text evidence="1">Homodimer.</text>
</comment>
<comment type="similarity">
    <text evidence="1">Belongs to the azoreductase type 1 family.</text>
</comment>
<organism>
    <name type="scientific">Idiomarina loihiensis (strain ATCC BAA-735 / DSM 15497 / L2-TR)</name>
    <dbReference type="NCBI Taxonomy" id="283942"/>
    <lineage>
        <taxon>Bacteria</taxon>
        <taxon>Pseudomonadati</taxon>
        <taxon>Pseudomonadota</taxon>
        <taxon>Gammaproteobacteria</taxon>
        <taxon>Alteromonadales</taxon>
        <taxon>Idiomarinaceae</taxon>
        <taxon>Idiomarina</taxon>
    </lineage>
</organism>
<gene>
    <name evidence="1" type="primary">azoR1</name>
    <name type="ordered locus">IL1292</name>
</gene>
<feature type="chain" id="PRO_0000245923" description="FMN-dependent NADH:quinone oxidoreductase 1">
    <location>
        <begin position="1"/>
        <end position="186"/>
    </location>
</feature>
<feature type="binding site" evidence="1">
    <location>
        <begin position="15"/>
        <end position="17"/>
    </location>
    <ligand>
        <name>FMN</name>
        <dbReference type="ChEBI" id="CHEBI:58210"/>
    </ligand>
</feature>
<feature type="binding site" evidence="1">
    <location>
        <begin position="81"/>
        <end position="84"/>
    </location>
    <ligand>
        <name>FMN</name>
        <dbReference type="ChEBI" id="CHEBI:58210"/>
    </ligand>
</feature>
<reference key="1">
    <citation type="journal article" date="2004" name="Proc. Natl. Acad. Sci. U.S.A.">
        <title>Genome sequence of the deep-sea gamma-proteobacterium Idiomarina loihiensis reveals amino acid fermentation as a source of carbon and energy.</title>
        <authorList>
            <person name="Hou S."/>
            <person name="Saw J.H."/>
            <person name="Lee K.S."/>
            <person name="Freitas T.A."/>
            <person name="Belisle C."/>
            <person name="Kawarabayasi Y."/>
            <person name="Donachie S.P."/>
            <person name="Pikina A."/>
            <person name="Galperin M.Y."/>
            <person name="Koonin E.V."/>
            <person name="Makarova K.S."/>
            <person name="Omelchenko M.V."/>
            <person name="Sorokin A."/>
            <person name="Wolf Y.I."/>
            <person name="Li Q.X."/>
            <person name="Keum Y.S."/>
            <person name="Campbell S."/>
            <person name="Denery J."/>
            <person name="Aizawa S."/>
            <person name="Shibata S."/>
            <person name="Malahoff A."/>
            <person name="Alam M."/>
        </authorList>
    </citation>
    <scope>NUCLEOTIDE SEQUENCE [LARGE SCALE GENOMIC DNA]</scope>
    <source>
        <strain>ATCC BAA-735 / DSM 15497 / L2-TR</strain>
    </source>
</reference>
<name>AZOR1_IDILO</name>
<keyword id="KW-0285">Flavoprotein</keyword>
<keyword id="KW-0288">FMN</keyword>
<keyword id="KW-0520">NAD</keyword>
<keyword id="KW-0560">Oxidoreductase</keyword>
<keyword id="KW-1185">Reference proteome</keyword>
<sequence>MKVLHLDSGIFLEQSVSRQVSQNIVNKLKEKQDITLFHRDLVANPVPHLAADELLAEEKPLIDELVQELLDADTLVIGAPMYNFTIPTQLKAWFDRVLQAGVTFKYTEQGPQGLVNGKKVYIASGRGGIYSQGEAQAMDHQESYLKQVLAFIGITDVTIIRAEGMNMGDEPRQQGFKEAEQEIETI</sequence>
<accession>Q5QYY9</accession>
<proteinExistence type="inferred from homology"/>